<dbReference type="EC" id="2.7.4.3" evidence="2"/>
<dbReference type="EMBL" id="CH933808">
    <property type="protein sequence ID" value="EDW09791.1"/>
    <property type="molecule type" value="Genomic_DNA"/>
</dbReference>
<dbReference type="SMR" id="B4KLY1"/>
<dbReference type="FunCoup" id="B4KLY1">
    <property type="interactions" value="1590"/>
</dbReference>
<dbReference type="EnsemblMetazoa" id="FBtr0171426">
    <property type="protein sequence ID" value="FBpp0169918"/>
    <property type="gene ID" value="FBgn0143436"/>
</dbReference>
<dbReference type="EnsemblMetazoa" id="XM_002005820.4">
    <property type="protein sequence ID" value="XP_002005856.1"/>
    <property type="gene ID" value="LOC6579983"/>
</dbReference>
<dbReference type="GeneID" id="6579983"/>
<dbReference type="KEGG" id="dmo:Dmoj_GI20701"/>
<dbReference type="CTD" id="204"/>
<dbReference type="eggNOG" id="KOG3078">
    <property type="taxonomic scope" value="Eukaryota"/>
</dbReference>
<dbReference type="HOGENOM" id="CLU_032354_1_0_1"/>
<dbReference type="InParanoid" id="B4KLY1"/>
<dbReference type="OMA" id="HYKVDAA"/>
<dbReference type="OrthoDB" id="439792at2759"/>
<dbReference type="PhylomeDB" id="B4KLY1"/>
<dbReference type="Proteomes" id="UP000009192">
    <property type="component" value="Unassembled WGS sequence"/>
</dbReference>
<dbReference type="GO" id="GO:0005829">
    <property type="term" value="C:cytosol"/>
    <property type="evidence" value="ECO:0007669"/>
    <property type="project" value="UniProtKB-SubCell"/>
</dbReference>
<dbReference type="GO" id="GO:0005758">
    <property type="term" value="C:mitochondrial intermembrane space"/>
    <property type="evidence" value="ECO:0007669"/>
    <property type="project" value="UniProtKB-SubCell"/>
</dbReference>
<dbReference type="GO" id="GO:0004017">
    <property type="term" value="F:adenylate kinase activity"/>
    <property type="evidence" value="ECO:0007669"/>
    <property type="project" value="UniProtKB-UniRule"/>
</dbReference>
<dbReference type="GO" id="GO:0005524">
    <property type="term" value="F:ATP binding"/>
    <property type="evidence" value="ECO:0007669"/>
    <property type="project" value="UniProtKB-KW"/>
</dbReference>
<dbReference type="GO" id="GO:0006172">
    <property type="term" value="P:ADP biosynthetic process"/>
    <property type="evidence" value="ECO:0007669"/>
    <property type="project" value="UniProtKB-UniRule"/>
</dbReference>
<dbReference type="GO" id="GO:0046033">
    <property type="term" value="P:AMP metabolic process"/>
    <property type="evidence" value="ECO:0007669"/>
    <property type="project" value="UniProtKB-UniRule"/>
</dbReference>
<dbReference type="GO" id="GO:0046034">
    <property type="term" value="P:ATP metabolic process"/>
    <property type="evidence" value="ECO:0007669"/>
    <property type="project" value="UniProtKB-UniRule"/>
</dbReference>
<dbReference type="CDD" id="cd01428">
    <property type="entry name" value="ADK"/>
    <property type="match status" value="1"/>
</dbReference>
<dbReference type="FunFam" id="3.40.50.300:FF:000106">
    <property type="entry name" value="Adenylate kinase mitochondrial"/>
    <property type="match status" value="1"/>
</dbReference>
<dbReference type="Gene3D" id="3.40.50.300">
    <property type="entry name" value="P-loop containing nucleotide triphosphate hydrolases"/>
    <property type="match status" value="1"/>
</dbReference>
<dbReference type="HAMAP" id="MF_00235">
    <property type="entry name" value="Adenylate_kinase_Adk"/>
    <property type="match status" value="1"/>
</dbReference>
<dbReference type="HAMAP" id="MF_03168">
    <property type="entry name" value="Adenylate_kinase_AK2"/>
    <property type="match status" value="1"/>
</dbReference>
<dbReference type="InterPro" id="IPR006259">
    <property type="entry name" value="Adenyl_kin_sub"/>
</dbReference>
<dbReference type="InterPro" id="IPR000850">
    <property type="entry name" value="Adenylat/UMP-CMP_kin"/>
</dbReference>
<dbReference type="InterPro" id="IPR033690">
    <property type="entry name" value="Adenylat_kinase_CS"/>
</dbReference>
<dbReference type="InterPro" id="IPR007862">
    <property type="entry name" value="Adenylate_kinase_lid-dom"/>
</dbReference>
<dbReference type="InterPro" id="IPR028587">
    <property type="entry name" value="AK2"/>
</dbReference>
<dbReference type="InterPro" id="IPR027417">
    <property type="entry name" value="P-loop_NTPase"/>
</dbReference>
<dbReference type="NCBIfam" id="TIGR01351">
    <property type="entry name" value="adk"/>
    <property type="match status" value="1"/>
</dbReference>
<dbReference type="NCBIfam" id="NF001380">
    <property type="entry name" value="PRK00279.1-2"/>
    <property type="match status" value="1"/>
</dbReference>
<dbReference type="NCBIfam" id="NF001381">
    <property type="entry name" value="PRK00279.1-3"/>
    <property type="match status" value="1"/>
</dbReference>
<dbReference type="NCBIfam" id="NF011100">
    <property type="entry name" value="PRK14527.1"/>
    <property type="match status" value="1"/>
</dbReference>
<dbReference type="PANTHER" id="PTHR23359">
    <property type="entry name" value="NUCLEOTIDE KINASE"/>
    <property type="match status" value="1"/>
</dbReference>
<dbReference type="Pfam" id="PF00406">
    <property type="entry name" value="ADK"/>
    <property type="match status" value="1"/>
</dbReference>
<dbReference type="Pfam" id="PF05191">
    <property type="entry name" value="ADK_lid"/>
    <property type="match status" value="1"/>
</dbReference>
<dbReference type="PRINTS" id="PR00094">
    <property type="entry name" value="ADENYLTKNASE"/>
</dbReference>
<dbReference type="SUPFAM" id="SSF52540">
    <property type="entry name" value="P-loop containing nucleoside triphosphate hydrolases"/>
    <property type="match status" value="1"/>
</dbReference>
<dbReference type="PROSITE" id="PS00113">
    <property type="entry name" value="ADENYLATE_KINASE"/>
    <property type="match status" value="1"/>
</dbReference>
<evidence type="ECO:0000250" key="1"/>
<evidence type="ECO:0000255" key="2">
    <source>
        <dbReference type="HAMAP-Rule" id="MF_03168"/>
    </source>
</evidence>
<reference key="1">
    <citation type="journal article" date="2007" name="Nature">
        <title>Evolution of genes and genomes on the Drosophila phylogeny.</title>
        <authorList>
            <consortium name="Drosophila 12 genomes consortium"/>
        </authorList>
    </citation>
    <scope>NUCLEOTIDE SEQUENCE [LARGE SCALE GENOMIC DNA]</scope>
    <source>
        <strain>Tucson 15081-1352.22</strain>
    </source>
</reference>
<comment type="function">
    <text evidence="2">Catalyzes the reversible transfer of the terminal phosphate group between ATP and AMP. Plays an important role in cellular energy homeostasis and in adenine nucleotide metabolism. Adenylate kinase activity is critical for regulation of the phosphate utilization and the AMP de novo biosynthesis pathways.</text>
</comment>
<comment type="catalytic activity">
    <reaction evidence="2">
        <text>AMP + ATP = 2 ADP</text>
        <dbReference type="Rhea" id="RHEA:12973"/>
        <dbReference type="ChEBI" id="CHEBI:30616"/>
        <dbReference type="ChEBI" id="CHEBI:456215"/>
        <dbReference type="ChEBI" id="CHEBI:456216"/>
        <dbReference type="EC" id="2.7.4.3"/>
    </reaction>
</comment>
<comment type="subunit">
    <text evidence="2">Monomer.</text>
</comment>
<comment type="subcellular location">
    <subcellularLocation>
        <location evidence="2">Cytoplasm</location>
        <location evidence="2">Cytosol</location>
    </subcellularLocation>
    <subcellularLocation>
        <location evidence="2">Mitochondrion intermembrane space</location>
    </subcellularLocation>
    <text evidence="2">Predominantly mitochondrial.</text>
</comment>
<comment type="domain">
    <text evidence="2">Consists of three domains, a large central CORE domain and two small peripheral domains, NMPbind and LID, which undergo movements during catalysis. The LID domain closes over the site of phosphoryl transfer upon ATP binding. Assembling and dissambling the active center during each catalytic cycle provides an effective means to prevent ATP hydrolysis.</text>
</comment>
<comment type="similarity">
    <text evidence="2">Belongs to the adenylate kinase family. AK2 subfamily.</text>
</comment>
<accession>B4KLY1</accession>
<name>KAD2_DROMO</name>
<sequence>MAPNVSIPVERYEPSTAGVNAILLGPPGSGKGTQAPLLKEKFCVCHLSTGDMLRAEIASGSKLGAELKKVMDEGKLVSDDLVVDMIDSNLDKPECKNGFLLDGFPRTVVQAQKLDSLLDKRKTSLDAVIEFAIDDNLLVRRITGRLIHQASGRSYHEEFAPPKVPMKDDITGEPLMKRSDDNAEALKKRLEAYHKQTKPLVDYYGLRGLHFKVDAAKKASDVFSTIDSIFQRNISKKVQL</sequence>
<proteinExistence type="inferred from homology"/>
<gene>
    <name evidence="2" type="primary">Adk2</name>
    <name type="ORF">GI20701</name>
</gene>
<feature type="chain" id="PRO_0000365707" description="Adenylate kinase">
    <location>
        <begin position="1"/>
        <end position="240"/>
    </location>
</feature>
<feature type="region of interest" description="NMP" evidence="2">
    <location>
        <begin position="48"/>
        <end position="77"/>
    </location>
</feature>
<feature type="region of interest" description="LID" evidence="2">
    <location>
        <begin position="144"/>
        <end position="181"/>
    </location>
</feature>
<feature type="binding site" evidence="2">
    <location>
        <begin position="28"/>
        <end position="33"/>
    </location>
    <ligand>
        <name>ATP</name>
        <dbReference type="ChEBI" id="CHEBI:30616"/>
    </ligand>
</feature>
<feature type="binding site" evidence="2">
    <location>
        <position position="49"/>
    </location>
    <ligand>
        <name>AMP</name>
        <dbReference type="ChEBI" id="CHEBI:456215"/>
    </ligand>
</feature>
<feature type="binding site" evidence="2">
    <location>
        <position position="54"/>
    </location>
    <ligand>
        <name>AMP</name>
        <dbReference type="ChEBI" id="CHEBI:456215"/>
    </ligand>
</feature>
<feature type="binding site" evidence="2">
    <location>
        <begin position="75"/>
        <end position="77"/>
    </location>
    <ligand>
        <name>AMP</name>
        <dbReference type="ChEBI" id="CHEBI:456215"/>
    </ligand>
</feature>
<feature type="binding site" evidence="2">
    <location>
        <begin position="103"/>
        <end position="106"/>
    </location>
    <ligand>
        <name>AMP</name>
        <dbReference type="ChEBI" id="CHEBI:456215"/>
    </ligand>
</feature>
<feature type="binding site" evidence="2">
    <location>
        <position position="110"/>
    </location>
    <ligand>
        <name>AMP</name>
        <dbReference type="ChEBI" id="CHEBI:456215"/>
    </ligand>
</feature>
<feature type="binding site" evidence="2">
    <location>
        <position position="145"/>
    </location>
    <ligand>
        <name>ATP</name>
        <dbReference type="ChEBI" id="CHEBI:30616"/>
    </ligand>
</feature>
<feature type="binding site" evidence="2">
    <location>
        <begin position="154"/>
        <end position="155"/>
    </location>
    <ligand>
        <name>ATP</name>
        <dbReference type="ChEBI" id="CHEBI:30616"/>
    </ligand>
</feature>
<feature type="binding site" evidence="2">
    <location>
        <position position="178"/>
    </location>
    <ligand>
        <name>AMP</name>
        <dbReference type="ChEBI" id="CHEBI:456215"/>
    </ligand>
</feature>
<feature type="binding site" evidence="2">
    <location>
        <position position="189"/>
    </location>
    <ligand>
        <name>AMP</name>
        <dbReference type="ChEBI" id="CHEBI:456215"/>
    </ligand>
</feature>
<feature type="binding site" evidence="2">
    <location>
        <position position="217"/>
    </location>
    <ligand>
        <name>ATP</name>
        <dbReference type="ChEBI" id="CHEBI:30616"/>
    </ligand>
</feature>
<feature type="modified residue" description="Phosphoserine" evidence="1">
    <location>
        <position position="48"/>
    </location>
</feature>
<organism>
    <name type="scientific">Drosophila mojavensis</name>
    <name type="common">Fruit fly</name>
    <dbReference type="NCBI Taxonomy" id="7230"/>
    <lineage>
        <taxon>Eukaryota</taxon>
        <taxon>Metazoa</taxon>
        <taxon>Ecdysozoa</taxon>
        <taxon>Arthropoda</taxon>
        <taxon>Hexapoda</taxon>
        <taxon>Insecta</taxon>
        <taxon>Pterygota</taxon>
        <taxon>Neoptera</taxon>
        <taxon>Endopterygota</taxon>
        <taxon>Diptera</taxon>
        <taxon>Brachycera</taxon>
        <taxon>Muscomorpha</taxon>
        <taxon>Ephydroidea</taxon>
        <taxon>Drosophilidae</taxon>
        <taxon>Drosophila</taxon>
    </lineage>
</organism>
<keyword id="KW-0067">ATP-binding</keyword>
<keyword id="KW-0963">Cytoplasm</keyword>
<keyword id="KW-0418">Kinase</keyword>
<keyword id="KW-0496">Mitochondrion</keyword>
<keyword id="KW-0547">Nucleotide-binding</keyword>
<keyword id="KW-0597">Phosphoprotein</keyword>
<keyword id="KW-1185">Reference proteome</keyword>
<keyword id="KW-0808">Transferase</keyword>
<protein>
    <recommendedName>
        <fullName evidence="2">Adenylate kinase</fullName>
        <ecNumber evidence="2">2.7.4.3</ecNumber>
    </recommendedName>
    <alternativeName>
        <fullName evidence="2">ATP-AMP transphosphorylase</fullName>
    </alternativeName>
    <alternativeName>
        <fullName evidence="2">ATP:AMP phosphotransferase</fullName>
    </alternativeName>
    <alternativeName>
        <fullName evidence="2">Adenylate kinase cytosolic and mitochondrial</fullName>
    </alternativeName>
    <alternativeName>
        <fullName evidence="2">Adenylate monophosphate kinase</fullName>
    </alternativeName>
</protein>